<organism>
    <name type="scientific">Pseudomonas putida (strain ATCC 47054 / DSM 6125 / CFBP 8728 / NCIMB 11950 / KT2440)</name>
    <dbReference type="NCBI Taxonomy" id="160488"/>
    <lineage>
        <taxon>Bacteria</taxon>
        <taxon>Pseudomonadati</taxon>
        <taxon>Pseudomonadota</taxon>
        <taxon>Gammaproteobacteria</taxon>
        <taxon>Pseudomonadales</taxon>
        <taxon>Pseudomonadaceae</taxon>
        <taxon>Pseudomonas</taxon>
    </lineage>
</organism>
<dbReference type="EC" id="1.4.99.-"/>
<dbReference type="EMBL" id="AE015451">
    <property type="protein sequence ID" value="AAN70011.1"/>
    <property type="molecule type" value="Genomic_DNA"/>
</dbReference>
<dbReference type="RefSeq" id="NP_746547.1">
    <property type="nucleotide sequence ID" value="NC_002947.4"/>
</dbReference>
<dbReference type="RefSeq" id="WP_010955142.1">
    <property type="nucleotide sequence ID" value="NZ_CP169744.1"/>
</dbReference>
<dbReference type="SMR" id="Q88EM0"/>
<dbReference type="STRING" id="160488.PP_4434"/>
<dbReference type="PaxDb" id="160488-PP_4434"/>
<dbReference type="KEGG" id="ppu:PP_4434"/>
<dbReference type="PATRIC" id="fig|160488.4.peg.4715"/>
<dbReference type="eggNOG" id="COG0665">
    <property type="taxonomic scope" value="Bacteria"/>
</dbReference>
<dbReference type="HOGENOM" id="CLU_007884_9_2_6"/>
<dbReference type="OrthoDB" id="9805337at2"/>
<dbReference type="PhylomeDB" id="Q88EM0"/>
<dbReference type="BioCyc" id="PPUT160488:G1G01-4715-MONOMER"/>
<dbReference type="Proteomes" id="UP000000556">
    <property type="component" value="Chromosome"/>
</dbReference>
<dbReference type="GO" id="GO:0005737">
    <property type="term" value="C:cytoplasm"/>
    <property type="evidence" value="ECO:0007669"/>
    <property type="project" value="TreeGrafter"/>
</dbReference>
<dbReference type="GO" id="GO:0005886">
    <property type="term" value="C:plasma membrane"/>
    <property type="evidence" value="ECO:0007669"/>
    <property type="project" value="TreeGrafter"/>
</dbReference>
<dbReference type="GO" id="GO:0008718">
    <property type="term" value="F:D-amino-acid dehydrogenase activity"/>
    <property type="evidence" value="ECO:0007669"/>
    <property type="project" value="UniProtKB-UniRule"/>
</dbReference>
<dbReference type="GO" id="GO:0055130">
    <property type="term" value="P:D-alanine catabolic process"/>
    <property type="evidence" value="ECO:0007669"/>
    <property type="project" value="TreeGrafter"/>
</dbReference>
<dbReference type="FunFam" id="3.50.50.60:FF:000020">
    <property type="entry name" value="D-amino acid dehydrogenase"/>
    <property type="match status" value="1"/>
</dbReference>
<dbReference type="Gene3D" id="3.30.9.10">
    <property type="entry name" value="D-Amino Acid Oxidase, subunit A, domain 2"/>
    <property type="match status" value="1"/>
</dbReference>
<dbReference type="Gene3D" id="3.50.50.60">
    <property type="entry name" value="FAD/NAD(P)-binding domain"/>
    <property type="match status" value="2"/>
</dbReference>
<dbReference type="HAMAP" id="MF_01202">
    <property type="entry name" value="DadA"/>
    <property type="match status" value="1"/>
</dbReference>
<dbReference type="InterPro" id="IPR023080">
    <property type="entry name" value="DadA"/>
</dbReference>
<dbReference type="InterPro" id="IPR006076">
    <property type="entry name" value="FAD-dep_OxRdtase"/>
</dbReference>
<dbReference type="InterPro" id="IPR036188">
    <property type="entry name" value="FAD/NAD-bd_sf"/>
</dbReference>
<dbReference type="NCBIfam" id="NF001933">
    <property type="entry name" value="PRK00711.1"/>
    <property type="match status" value="1"/>
</dbReference>
<dbReference type="PANTHER" id="PTHR13847:SF280">
    <property type="entry name" value="D-AMINO ACID DEHYDROGENASE"/>
    <property type="match status" value="1"/>
</dbReference>
<dbReference type="PANTHER" id="PTHR13847">
    <property type="entry name" value="SARCOSINE DEHYDROGENASE-RELATED"/>
    <property type="match status" value="1"/>
</dbReference>
<dbReference type="Pfam" id="PF01266">
    <property type="entry name" value="DAO"/>
    <property type="match status" value="1"/>
</dbReference>
<dbReference type="SUPFAM" id="SSF54373">
    <property type="entry name" value="FAD-linked reductases, C-terminal domain"/>
    <property type="match status" value="1"/>
</dbReference>
<dbReference type="SUPFAM" id="SSF51905">
    <property type="entry name" value="FAD/NAD(P)-binding domain"/>
    <property type="match status" value="1"/>
</dbReference>
<feature type="chain" id="PRO_0000166140" description="D-amino acid dehydrogenase 1">
    <location>
        <begin position="1"/>
        <end position="432"/>
    </location>
</feature>
<feature type="binding site" evidence="2">
    <location>
        <begin position="3"/>
        <end position="17"/>
    </location>
    <ligand>
        <name>FAD</name>
        <dbReference type="ChEBI" id="CHEBI:57692"/>
    </ligand>
</feature>
<protein>
    <recommendedName>
        <fullName>D-amino acid dehydrogenase 1</fullName>
        <ecNumber>1.4.99.-</ecNumber>
    </recommendedName>
</protein>
<gene>
    <name type="primary">dadA1</name>
    <name type="synonym">dadA-1</name>
    <name type="ordered locus">PP_4434</name>
</gene>
<name>DADA1_PSEPK</name>
<sequence length="432" mass="47155">MRVLILGSGVVGTVSAYYLAREGFEVVVVDRQDGPAMETSFANAGQVSPGYASPWSAPGVPLKAIRWMLQQHAPLAIKPTSSLDQYRWMIQMLRNCNPASYAVNKERMVRISEYSRDCLDELRAETGISYEARQLGTTQLFRTQAQVDNAAKDIAILKQSGVPFELLDRDGIAKAEPALASVRDKLAGALRLPNDQTGDCQMFTRKLAKMAEELGVEFRFGCNIDRLECSGDTISGVWIDGKLEVADQYVLALGSYSPHMLKPLGIQAPIYPLKGYSLTIPITDASMAPSSTILDETYKVAITRFDDRIRVGGMAEIAGFDLSLNARRRDTLELVVGDLYPKGGDLTKATFWTGLRPATPDGTPIVGKTKYRNLFLNTGHGTLGWTMSCGSGRLLADLMAGKKPKISAKGLDISRYSNQKEAHNHGNPATAL</sequence>
<keyword id="KW-0274">FAD</keyword>
<keyword id="KW-0285">Flavoprotein</keyword>
<keyword id="KW-0560">Oxidoreductase</keyword>
<keyword id="KW-1185">Reference proteome</keyword>
<comment type="function">
    <text evidence="1">Oxidative deamination of D-amino acids.</text>
</comment>
<comment type="catalytic activity">
    <reaction>
        <text>a D-alpha-amino acid + A + H2O = a 2-oxocarboxylate + AH2 + NH4(+)</text>
        <dbReference type="Rhea" id="RHEA:18125"/>
        <dbReference type="ChEBI" id="CHEBI:13193"/>
        <dbReference type="ChEBI" id="CHEBI:15377"/>
        <dbReference type="ChEBI" id="CHEBI:17499"/>
        <dbReference type="ChEBI" id="CHEBI:28938"/>
        <dbReference type="ChEBI" id="CHEBI:35179"/>
        <dbReference type="ChEBI" id="CHEBI:59871"/>
    </reaction>
</comment>
<comment type="cofactor">
    <cofactor evidence="1">
        <name>FAD</name>
        <dbReference type="ChEBI" id="CHEBI:57692"/>
    </cofactor>
</comment>
<comment type="similarity">
    <text evidence="3">Belongs to the DadA oxidoreductase family.</text>
</comment>
<proteinExistence type="inferred from homology"/>
<evidence type="ECO:0000250" key="1"/>
<evidence type="ECO:0000255" key="2"/>
<evidence type="ECO:0000305" key="3"/>
<reference key="1">
    <citation type="journal article" date="2002" name="Environ. Microbiol.">
        <title>Complete genome sequence and comparative analysis of the metabolically versatile Pseudomonas putida KT2440.</title>
        <authorList>
            <person name="Nelson K.E."/>
            <person name="Weinel C."/>
            <person name="Paulsen I.T."/>
            <person name="Dodson R.J."/>
            <person name="Hilbert H."/>
            <person name="Martins dos Santos V.A.P."/>
            <person name="Fouts D.E."/>
            <person name="Gill S.R."/>
            <person name="Pop M."/>
            <person name="Holmes M."/>
            <person name="Brinkac L.M."/>
            <person name="Beanan M.J."/>
            <person name="DeBoy R.T."/>
            <person name="Daugherty S.C."/>
            <person name="Kolonay J.F."/>
            <person name="Madupu R."/>
            <person name="Nelson W.C."/>
            <person name="White O."/>
            <person name="Peterson J.D."/>
            <person name="Khouri H.M."/>
            <person name="Hance I."/>
            <person name="Chris Lee P."/>
            <person name="Holtzapple E.K."/>
            <person name="Scanlan D."/>
            <person name="Tran K."/>
            <person name="Moazzez A."/>
            <person name="Utterback T.R."/>
            <person name="Rizzo M."/>
            <person name="Lee K."/>
            <person name="Kosack D."/>
            <person name="Moestl D."/>
            <person name="Wedler H."/>
            <person name="Lauber J."/>
            <person name="Stjepandic D."/>
            <person name="Hoheisel J."/>
            <person name="Straetz M."/>
            <person name="Heim S."/>
            <person name="Kiewitz C."/>
            <person name="Eisen J.A."/>
            <person name="Timmis K.N."/>
            <person name="Duesterhoeft A."/>
            <person name="Tuemmler B."/>
            <person name="Fraser C.M."/>
        </authorList>
    </citation>
    <scope>NUCLEOTIDE SEQUENCE [LARGE SCALE GENOMIC DNA]</scope>
    <source>
        <strain>ATCC 47054 / DSM 6125 / CFBP 8728 / NCIMB 11950 / KT2440</strain>
    </source>
</reference>
<accession>Q88EM0</accession>